<protein>
    <recommendedName>
        <fullName evidence="1">Large ribosomal subunit protein uL29</fullName>
    </recommendedName>
    <alternativeName>
        <fullName evidence="2">50S ribosomal protein L29</fullName>
    </alternativeName>
</protein>
<comment type="similarity">
    <text evidence="1">Belongs to the universal ribosomal protein uL29 family.</text>
</comment>
<reference key="1">
    <citation type="journal article" date="2004" name="Nat. Biotechnol.">
        <title>The genome sequence of the capnophilic rumen bacterium Mannheimia succiniciproducens.</title>
        <authorList>
            <person name="Hong S.H."/>
            <person name="Kim J.S."/>
            <person name="Lee S.Y."/>
            <person name="In Y.H."/>
            <person name="Choi S.S."/>
            <person name="Rih J.-K."/>
            <person name="Kim C.H."/>
            <person name="Jeong H."/>
            <person name="Hur C.G."/>
            <person name="Kim J.J."/>
        </authorList>
    </citation>
    <scope>NUCLEOTIDE SEQUENCE [LARGE SCALE GENOMIC DNA]</scope>
    <source>
        <strain>KCTC 0769BP / MBEL55E</strain>
    </source>
</reference>
<evidence type="ECO:0000255" key="1">
    <source>
        <dbReference type="HAMAP-Rule" id="MF_00374"/>
    </source>
</evidence>
<evidence type="ECO:0000305" key="2"/>
<proteinExistence type="inferred from homology"/>
<organism>
    <name type="scientific">Mannheimia succiniciproducens (strain KCTC 0769BP / MBEL55E)</name>
    <dbReference type="NCBI Taxonomy" id="221988"/>
    <lineage>
        <taxon>Bacteria</taxon>
        <taxon>Pseudomonadati</taxon>
        <taxon>Pseudomonadota</taxon>
        <taxon>Gammaproteobacteria</taxon>
        <taxon>Pasteurellales</taxon>
        <taxon>Pasteurellaceae</taxon>
        <taxon>Basfia</taxon>
    </lineage>
</organism>
<feature type="chain" id="PRO_0000130415" description="Large ribosomal subunit protein uL29">
    <location>
        <begin position="1"/>
        <end position="63"/>
    </location>
</feature>
<dbReference type="EMBL" id="AE016827">
    <property type="protein sequence ID" value="AAU38647.1"/>
    <property type="molecule type" value="Genomic_DNA"/>
</dbReference>
<dbReference type="RefSeq" id="WP_011201197.1">
    <property type="nucleotide sequence ID" value="NC_006300.1"/>
</dbReference>
<dbReference type="SMR" id="Q65QW3"/>
<dbReference type="STRING" id="221988.MS2040"/>
<dbReference type="KEGG" id="msu:MS2040"/>
<dbReference type="eggNOG" id="COG0255">
    <property type="taxonomic scope" value="Bacteria"/>
</dbReference>
<dbReference type="HOGENOM" id="CLU_158491_1_2_6"/>
<dbReference type="OrthoDB" id="9815192at2"/>
<dbReference type="Proteomes" id="UP000000607">
    <property type="component" value="Chromosome"/>
</dbReference>
<dbReference type="GO" id="GO:0022625">
    <property type="term" value="C:cytosolic large ribosomal subunit"/>
    <property type="evidence" value="ECO:0007669"/>
    <property type="project" value="TreeGrafter"/>
</dbReference>
<dbReference type="GO" id="GO:0003735">
    <property type="term" value="F:structural constituent of ribosome"/>
    <property type="evidence" value="ECO:0007669"/>
    <property type="project" value="InterPro"/>
</dbReference>
<dbReference type="GO" id="GO:0006412">
    <property type="term" value="P:translation"/>
    <property type="evidence" value="ECO:0007669"/>
    <property type="project" value="UniProtKB-UniRule"/>
</dbReference>
<dbReference type="CDD" id="cd00427">
    <property type="entry name" value="Ribosomal_L29_HIP"/>
    <property type="match status" value="1"/>
</dbReference>
<dbReference type="FunFam" id="1.10.287.310:FF:000001">
    <property type="entry name" value="50S ribosomal protein L29"/>
    <property type="match status" value="1"/>
</dbReference>
<dbReference type="Gene3D" id="1.10.287.310">
    <property type="match status" value="1"/>
</dbReference>
<dbReference type="HAMAP" id="MF_00374">
    <property type="entry name" value="Ribosomal_uL29"/>
    <property type="match status" value="1"/>
</dbReference>
<dbReference type="InterPro" id="IPR050063">
    <property type="entry name" value="Ribosomal_protein_uL29"/>
</dbReference>
<dbReference type="InterPro" id="IPR001854">
    <property type="entry name" value="Ribosomal_uL29"/>
</dbReference>
<dbReference type="InterPro" id="IPR018254">
    <property type="entry name" value="Ribosomal_uL29_CS"/>
</dbReference>
<dbReference type="InterPro" id="IPR036049">
    <property type="entry name" value="Ribosomal_uL29_sf"/>
</dbReference>
<dbReference type="NCBIfam" id="TIGR00012">
    <property type="entry name" value="L29"/>
    <property type="match status" value="1"/>
</dbReference>
<dbReference type="PANTHER" id="PTHR10916">
    <property type="entry name" value="60S RIBOSOMAL PROTEIN L35/50S RIBOSOMAL PROTEIN L29"/>
    <property type="match status" value="1"/>
</dbReference>
<dbReference type="PANTHER" id="PTHR10916:SF0">
    <property type="entry name" value="LARGE RIBOSOMAL SUBUNIT PROTEIN UL29C"/>
    <property type="match status" value="1"/>
</dbReference>
<dbReference type="Pfam" id="PF00831">
    <property type="entry name" value="Ribosomal_L29"/>
    <property type="match status" value="1"/>
</dbReference>
<dbReference type="SUPFAM" id="SSF46561">
    <property type="entry name" value="Ribosomal protein L29 (L29p)"/>
    <property type="match status" value="1"/>
</dbReference>
<dbReference type="PROSITE" id="PS00579">
    <property type="entry name" value="RIBOSOMAL_L29"/>
    <property type="match status" value="1"/>
</dbReference>
<gene>
    <name evidence="1" type="primary">rpmC</name>
    <name type="ordered locus">MS2040</name>
</gene>
<keyword id="KW-0687">Ribonucleoprotein</keyword>
<keyword id="KW-0689">Ribosomal protein</keyword>
<sequence length="63" mass="7089">MKAQELRAKTVEELNAELANLAGEQFKLRMQAATGQLQQTHQLKQVRRNIAQVKTVLTEKAGE</sequence>
<name>RL29_MANSM</name>
<accession>Q65QW3</accession>